<accession>Q0S2C5</accession>
<name>TRMD_RHOJR</name>
<evidence type="ECO:0000255" key="1">
    <source>
        <dbReference type="HAMAP-Rule" id="MF_00605"/>
    </source>
</evidence>
<protein>
    <recommendedName>
        <fullName evidence="1">tRNA (guanine-N(1)-)-methyltransferase</fullName>
        <ecNumber evidence="1">2.1.1.228</ecNumber>
    </recommendedName>
    <alternativeName>
        <fullName evidence="1">M1G-methyltransferase</fullName>
    </alternativeName>
    <alternativeName>
        <fullName evidence="1">tRNA [GM37] methyltransferase</fullName>
    </alternativeName>
</protein>
<organism>
    <name type="scientific">Rhodococcus jostii (strain RHA1)</name>
    <dbReference type="NCBI Taxonomy" id="101510"/>
    <lineage>
        <taxon>Bacteria</taxon>
        <taxon>Bacillati</taxon>
        <taxon>Actinomycetota</taxon>
        <taxon>Actinomycetes</taxon>
        <taxon>Mycobacteriales</taxon>
        <taxon>Nocardiaceae</taxon>
        <taxon>Rhodococcus</taxon>
    </lineage>
</organism>
<feature type="chain" id="PRO_0000257458" description="tRNA (guanine-N(1)-)-methyltransferase">
    <location>
        <begin position="1"/>
        <end position="230"/>
    </location>
</feature>
<feature type="binding site" evidence="1">
    <location>
        <position position="114"/>
    </location>
    <ligand>
        <name>S-adenosyl-L-methionine</name>
        <dbReference type="ChEBI" id="CHEBI:59789"/>
    </ligand>
</feature>
<feature type="binding site" evidence="1">
    <location>
        <begin position="138"/>
        <end position="143"/>
    </location>
    <ligand>
        <name>S-adenosyl-L-methionine</name>
        <dbReference type="ChEBI" id="CHEBI:59789"/>
    </ligand>
</feature>
<comment type="function">
    <text evidence="1">Specifically methylates guanosine-37 in various tRNAs.</text>
</comment>
<comment type="catalytic activity">
    <reaction evidence="1">
        <text>guanosine(37) in tRNA + S-adenosyl-L-methionine = N(1)-methylguanosine(37) in tRNA + S-adenosyl-L-homocysteine + H(+)</text>
        <dbReference type="Rhea" id="RHEA:36899"/>
        <dbReference type="Rhea" id="RHEA-COMP:10145"/>
        <dbReference type="Rhea" id="RHEA-COMP:10147"/>
        <dbReference type="ChEBI" id="CHEBI:15378"/>
        <dbReference type="ChEBI" id="CHEBI:57856"/>
        <dbReference type="ChEBI" id="CHEBI:59789"/>
        <dbReference type="ChEBI" id="CHEBI:73542"/>
        <dbReference type="ChEBI" id="CHEBI:74269"/>
        <dbReference type="EC" id="2.1.1.228"/>
    </reaction>
</comment>
<comment type="subunit">
    <text evidence="1">Homodimer.</text>
</comment>
<comment type="subcellular location">
    <subcellularLocation>
        <location evidence="1">Cytoplasm</location>
    </subcellularLocation>
</comment>
<comment type="similarity">
    <text evidence="1">Belongs to the RNA methyltransferase TrmD family.</text>
</comment>
<reference key="1">
    <citation type="journal article" date="2006" name="Proc. Natl. Acad. Sci. U.S.A.">
        <title>The complete genome of Rhodococcus sp. RHA1 provides insights into a catabolic powerhouse.</title>
        <authorList>
            <person name="McLeod M.P."/>
            <person name="Warren R.L."/>
            <person name="Hsiao W.W.L."/>
            <person name="Araki N."/>
            <person name="Myhre M."/>
            <person name="Fernandes C."/>
            <person name="Miyazawa D."/>
            <person name="Wong W."/>
            <person name="Lillquist A.L."/>
            <person name="Wang D."/>
            <person name="Dosanjh M."/>
            <person name="Hara H."/>
            <person name="Petrescu A."/>
            <person name="Morin R.D."/>
            <person name="Yang G."/>
            <person name="Stott J.M."/>
            <person name="Schein J.E."/>
            <person name="Shin H."/>
            <person name="Smailus D."/>
            <person name="Siddiqui A.S."/>
            <person name="Marra M.A."/>
            <person name="Jones S.J.M."/>
            <person name="Holt R."/>
            <person name="Brinkman F.S.L."/>
            <person name="Miyauchi K."/>
            <person name="Fukuda M."/>
            <person name="Davies J.E."/>
            <person name="Mohn W.W."/>
            <person name="Eltis L.D."/>
        </authorList>
    </citation>
    <scope>NUCLEOTIDE SEQUENCE [LARGE SCALE GENOMIC DNA]</scope>
    <source>
        <strain>RHA1</strain>
    </source>
</reference>
<proteinExistence type="inferred from homology"/>
<sequence>MRLDVVTIFPEYLEPLRAALLGKAIDKGLISVEVHDLRDWTHDVHKAVDDSPYGGGPGMVMKPTVWGPALDDVLAAGDGDTDTLLVVPTPAGVPFTQATAERWAGEKRIVFACGRYEGIDQRVFDDAARRVRVEEVSIGDYVLIGGEAAVLVMTEAFVRLIPGVLGNQQSHQEDSFSDGLLEGPSYTRPATWRGLDVPPVLLSGDHAKVAAWRREQSLQRTAERRPDLLP</sequence>
<keyword id="KW-0963">Cytoplasm</keyword>
<keyword id="KW-0489">Methyltransferase</keyword>
<keyword id="KW-0949">S-adenosyl-L-methionine</keyword>
<keyword id="KW-0808">Transferase</keyword>
<keyword id="KW-0819">tRNA processing</keyword>
<gene>
    <name evidence="1" type="primary">trmD</name>
    <name type="ordered locus">RHA1_ro06538</name>
</gene>
<dbReference type="EC" id="2.1.1.228" evidence="1"/>
<dbReference type="EMBL" id="CP000431">
    <property type="protein sequence ID" value="ABG98311.1"/>
    <property type="molecule type" value="Genomic_DNA"/>
</dbReference>
<dbReference type="RefSeq" id="WP_009479720.1">
    <property type="nucleotide sequence ID" value="NC_008268.1"/>
</dbReference>
<dbReference type="SMR" id="Q0S2C5"/>
<dbReference type="KEGG" id="rha:RHA1_ro06538"/>
<dbReference type="eggNOG" id="COG0336">
    <property type="taxonomic scope" value="Bacteria"/>
</dbReference>
<dbReference type="HOGENOM" id="CLU_047363_0_0_11"/>
<dbReference type="OrthoDB" id="9807416at2"/>
<dbReference type="Proteomes" id="UP000008710">
    <property type="component" value="Chromosome"/>
</dbReference>
<dbReference type="GO" id="GO:0005829">
    <property type="term" value="C:cytosol"/>
    <property type="evidence" value="ECO:0007669"/>
    <property type="project" value="TreeGrafter"/>
</dbReference>
<dbReference type="GO" id="GO:0052906">
    <property type="term" value="F:tRNA (guanine(37)-N1)-methyltransferase activity"/>
    <property type="evidence" value="ECO:0007669"/>
    <property type="project" value="UniProtKB-UniRule"/>
</dbReference>
<dbReference type="GO" id="GO:0002939">
    <property type="term" value="P:tRNA N1-guanine methylation"/>
    <property type="evidence" value="ECO:0007669"/>
    <property type="project" value="TreeGrafter"/>
</dbReference>
<dbReference type="CDD" id="cd18080">
    <property type="entry name" value="TrmD-like"/>
    <property type="match status" value="1"/>
</dbReference>
<dbReference type="FunFam" id="1.10.1270.20:FF:000004">
    <property type="entry name" value="tRNA (guanine-N(1)-)-methyltransferase"/>
    <property type="match status" value="1"/>
</dbReference>
<dbReference type="FunFam" id="3.40.1280.10:FF:000001">
    <property type="entry name" value="tRNA (guanine-N(1)-)-methyltransferase"/>
    <property type="match status" value="1"/>
</dbReference>
<dbReference type="Gene3D" id="3.40.1280.10">
    <property type="match status" value="1"/>
</dbReference>
<dbReference type="Gene3D" id="1.10.1270.20">
    <property type="entry name" value="tRNA(m1g37)methyltransferase, domain 2"/>
    <property type="match status" value="1"/>
</dbReference>
<dbReference type="HAMAP" id="MF_00605">
    <property type="entry name" value="TrmD"/>
    <property type="match status" value="1"/>
</dbReference>
<dbReference type="InterPro" id="IPR029028">
    <property type="entry name" value="Alpha/beta_knot_MTases"/>
</dbReference>
<dbReference type="InterPro" id="IPR023148">
    <property type="entry name" value="tRNA_m1G_MeTrfase_C_sf"/>
</dbReference>
<dbReference type="InterPro" id="IPR002649">
    <property type="entry name" value="tRNA_m1G_MeTrfase_TrmD"/>
</dbReference>
<dbReference type="InterPro" id="IPR029026">
    <property type="entry name" value="tRNA_m1G_MTases_N"/>
</dbReference>
<dbReference type="InterPro" id="IPR016009">
    <property type="entry name" value="tRNA_MeTrfase_TRMD/TRM10"/>
</dbReference>
<dbReference type="NCBIfam" id="NF000648">
    <property type="entry name" value="PRK00026.1"/>
    <property type="match status" value="1"/>
</dbReference>
<dbReference type="NCBIfam" id="TIGR00088">
    <property type="entry name" value="trmD"/>
    <property type="match status" value="1"/>
</dbReference>
<dbReference type="PANTHER" id="PTHR46417">
    <property type="entry name" value="TRNA (GUANINE-N(1)-)-METHYLTRANSFERASE"/>
    <property type="match status" value="1"/>
</dbReference>
<dbReference type="PANTHER" id="PTHR46417:SF1">
    <property type="entry name" value="TRNA (GUANINE-N(1)-)-METHYLTRANSFERASE"/>
    <property type="match status" value="1"/>
</dbReference>
<dbReference type="Pfam" id="PF01746">
    <property type="entry name" value="tRNA_m1G_MT"/>
    <property type="match status" value="1"/>
</dbReference>
<dbReference type="PIRSF" id="PIRSF000386">
    <property type="entry name" value="tRNA_mtase"/>
    <property type="match status" value="1"/>
</dbReference>
<dbReference type="SUPFAM" id="SSF75217">
    <property type="entry name" value="alpha/beta knot"/>
    <property type="match status" value="1"/>
</dbReference>